<comment type="function">
    <text evidence="1">Produces ATP from ADP in the presence of a proton gradient across the membrane.</text>
</comment>
<comment type="subunit">
    <text evidence="1">F-type ATPases have 2 components, CF(1) - the catalytic core - and CF(0) - the membrane proton channel. CF(1) has five subunits: alpha(3), beta(3), gamma(1), delta(1), epsilon(1). CF(0) has three main subunits: a, b and c.</text>
</comment>
<comment type="subcellular location">
    <subcellularLocation>
        <location evidence="1">Cell inner membrane</location>
        <topology evidence="1">Peripheral membrane protein</topology>
    </subcellularLocation>
</comment>
<comment type="similarity">
    <text evidence="1">Belongs to the ATPase epsilon chain family.</text>
</comment>
<feature type="chain" id="PRO_1000081724" description="ATP synthase epsilon chain">
    <location>
        <begin position="1"/>
        <end position="135"/>
    </location>
</feature>
<proteinExistence type="inferred from homology"/>
<name>ATPE_BRUC2</name>
<dbReference type="EMBL" id="CP000872">
    <property type="protein sequence ID" value="ABX62834.1"/>
    <property type="molecule type" value="Genomic_DNA"/>
</dbReference>
<dbReference type="RefSeq" id="WP_002964875.1">
    <property type="nucleotide sequence ID" value="NC_010103.1"/>
</dbReference>
<dbReference type="SMR" id="A9M836"/>
<dbReference type="KEGG" id="bcs:BCAN_A1836"/>
<dbReference type="HOGENOM" id="CLU_084338_2_1_5"/>
<dbReference type="Proteomes" id="UP000001385">
    <property type="component" value="Chromosome I"/>
</dbReference>
<dbReference type="GO" id="GO:0005886">
    <property type="term" value="C:plasma membrane"/>
    <property type="evidence" value="ECO:0007669"/>
    <property type="project" value="UniProtKB-SubCell"/>
</dbReference>
<dbReference type="GO" id="GO:0045259">
    <property type="term" value="C:proton-transporting ATP synthase complex"/>
    <property type="evidence" value="ECO:0007669"/>
    <property type="project" value="UniProtKB-KW"/>
</dbReference>
<dbReference type="GO" id="GO:0005524">
    <property type="term" value="F:ATP binding"/>
    <property type="evidence" value="ECO:0007669"/>
    <property type="project" value="UniProtKB-UniRule"/>
</dbReference>
<dbReference type="GO" id="GO:0046933">
    <property type="term" value="F:proton-transporting ATP synthase activity, rotational mechanism"/>
    <property type="evidence" value="ECO:0007669"/>
    <property type="project" value="UniProtKB-UniRule"/>
</dbReference>
<dbReference type="CDD" id="cd12152">
    <property type="entry name" value="F1-ATPase_delta"/>
    <property type="match status" value="1"/>
</dbReference>
<dbReference type="Gene3D" id="2.60.15.10">
    <property type="entry name" value="F0F1 ATP synthase delta/epsilon subunit, N-terminal"/>
    <property type="match status" value="1"/>
</dbReference>
<dbReference type="HAMAP" id="MF_00530">
    <property type="entry name" value="ATP_synth_epsil_bac"/>
    <property type="match status" value="1"/>
</dbReference>
<dbReference type="InterPro" id="IPR001469">
    <property type="entry name" value="ATP_synth_F1_dsu/esu"/>
</dbReference>
<dbReference type="InterPro" id="IPR020546">
    <property type="entry name" value="ATP_synth_F1_dsu/esu_N"/>
</dbReference>
<dbReference type="InterPro" id="IPR036771">
    <property type="entry name" value="ATPsynth_dsu/esu_N"/>
</dbReference>
<dbReference type="NCBIfam" id="TIGR01216">
    <property type="entry name" value="ATP_synt_epsi"/>
    <property type="match status" value="1"/>
</dbReference>
<dbReference type="NCBIfam" id="NF001851">
    <property type="entry name" value="PRK00571.2-4"/>
    <property type="match status" value="1"/>
</dbReference>
<dbReference type="PANTHER" id="PTHR13822">
    <property type="entry name" value="ATP SYNTHASE DELTA/EPSILON CHAIN"/>
    <property type="match status" value="1"/>
</dbReference>
<dbReference type="PANTHER" id="PTHR13822:SF10">
    <property type="entry name" value="ATP SYNTHASE EPSILON CHAIN, CHLOROPLASTIC"/>
    <property type="match status" value="1"/>
</dbReference>
<dbReference type="Pfam" id="PF02823">
    <property type="entry name" value="ATP-synt_DE_N"/>
    <property type="match status" value="1"/>
</dbReference>
<dbReference type="SUPFAM" id="SSF51344">
    <property type="entry name" value="Epsilon subunit of F1F0-ATP synthase N-terminal domain"/>
    <property type="match status" value="1"/>
</dbReference>
<organism>
    <name type="scientific">Brucella canis (strain ATCC 23365 / NCTC 10854 / RM-666)</name>
    <dbReference type="NCBI Taxonomy" id="483179"/>
    <lineage>
        <taxon>Bacteria</taxon>
        <taxon>Pseudomonadati</taxon>
        <taxon>Pseudomonadota</taxon>
        <taxon>Alphaproteobacteria</taxon>
        <taxon>Hyphomicrobiales</taxon>
        <taxon>Brucellaceae</taxon>
        <taxon>Brucella/Ochrobactrum group</taxon>
        <taxon>Brucella</taxon>
    </lineage>
</organism>
<accession>A9M836</accession>
<sequence>MAQAFQFELVSPERLLLSAQVTEVVIPGSEGYLTALAGHSPLMTTIMPGVVSVKLADGKTDSYVVFGGFADITPQGCTVLAESATHVDDIDPADIQHRIDHARKVLEDASSNEHRTKAEIFLHQLMTLQGAILPA</sequence>
<reference key="1">
    <citation type="submission" date="2007-10" db="EMBL/GenBank/DDBJ databases">
        <title>Brucella canis ATCC 23365 whole genome shotgun sequencing project.</title>
        <authorList>
            <person name="Setubal J.C."/>
            <person name="Bowns C."/>
            <person name="Boyle S."/>
            <person name="Crasta O.R."/>
            <person name="Czar M.J."/>
            <person name="Dharmanolla C."/>
            <person name="Gillespie J.J."/>
            <person name="Kenyon R.W."/>
            <person name="Lu J."/>
            <person name="Mane S."/>
            <person name="Mohapatra S."/>
            <person name="Nagrani S."/>
            <person name="Purkayastha A."/>
            <person name="Rajasimha H.K."/>
            <person name="Shallom J.M."/>
            <person name="Shallom S."/>
            <person name="Shukla M."/>
            <person name="Snyder E.E."/>
            <person name="Sobral B.W."/>
            <person name="Wattam A.R."/>
            <person name="Will R."/>
            <person name="Williams K."/>
            <person name="Yoo H."/>
            <person name="Bruce D."/>
            <person name="Detter C."/>
            <person name="Munk C."/>
            <person name="Brettin T.S."/>
        </authorList>
    </citation>
    <scope>NUCLEOTIDE SEQUENCE [LARGE SCALE GENOMIC DNA]</scope>
    <source>
        <strain>ATCC 23365 / NCTC 10854 / RM-666</strain>
    </source>
</reference>
<evidence type="ECO:0000255" key="1">
    <source>
        <dbReference type="HAMAP-Rule" id="MF_00530"/>
    </source>
</evidence>
<gene>
    <name evidence="1" type="primary">atpC</name>
    <name type="ordered locus">BCAN_A1836</name>
</gene>
<keyword id="KW-0066">ATP synthesis</keyword>
<keyword id="KW-0997">Cell inner membrane</keyword>
<keyword id="KW-1003">Cell membrane</keyword>
<keyword id="KW-0139">CF(1)</keyword>
<keyword id="KW-0375">Hydrogen ion transport</keyword>
<keyword id="KW-0406">Ion transport</keyword>
<keyword id="KW-0472">Membrane</keyword>
<keyword id="KW-1185">Reference proteome</keyword>
<keyword id="KW-0813">Transport</keyword>
<protein>
    <recommendedName>
        <fullName evidence="1">ATP synthase epsilon chain</fullName>
    </recommendedName>
    <alternativeName>
        <fullName evidence="1">ATP synthase F1 sector epsilon subunit</fullName>
    </alternativeName>
    <alternativeName>
        <fullName evidence="1">F-ATPase epsilon subunit</fullName>
    </alternativeName>
</protein>